<feature type="signal peptide" evidence="1">
    <location>
        <begin position="1"/>
        <end position="31"/>
    </location>
</feature>
<feature type="chain" id="PRO_0000270003" description="Chaperone SurA">
    <location>
        <begin position="32"/>
        <end position="519"/>
    </location>
</feature>
<feature type="domain" description="PpiC 1" evidence="1">
    <location>
        <begin position="223"/>
        <end position="324"/>
    </location>
</feature>
<feature type="domain" description="PpiC 2" evidence="1">
    <location>
        <begin position="364"/>
        <end position="463"/>
    </location>
</feature>
<feature type="region of interest" description="Disordered" evidence="2">
    <location>
        <begin position="31"/>
        <end position="50"/>
    </location>
</feature>
<feature type="region of interest" description="Disordered" evidence="2">
    <location>
        <begin position="196"/>
        <end position="221"/>
    </location>
</feature>
<feature type="region of interest" description="Disordered" evidence="2">
    <location>
        <begin position="328"/>
        <end position="361"/>
    </location>
</feature>
<feature type="compositionally biased region" description="Low complexity" evidence="2">
    <location>
        <begin position="31"/>
        <end position="45"/>
    </location>
</feature>
<feature type="compositionally biased region" description="Low complexity" evidence="2">
    <location>
        <begin position="197"/>
        <end position="207"/>
    </location>
</feature>
<reference key="1">
    <citation type="journal article" date="2003" name="Nat. Genet.">
        <title>Comparative analysis of the genome sequences of Bordetella pertussis, Bordetella parapertussis and Bordetella bronchiseptica.</title>
        <authorList>
            <person name="Parkhill J."/>
            <person name="Sebaihia M."/>
            <person name="Preston A."/>
            <person name="Murphy L.D."/>
            <person name="Thomson N.R."/>
            <person name="Harris D.E."/>
            <person name="Holden M.T.G."/>
            <person name="Churcher C.M."/>
            <person name="Bentley S.D."/>
            <person name="Mungall K.L."/>
            <person name="Cerdeno-Tarraga A.-M."/>
            <person name="Temple L."/>
            <person name="James K.D."/>
            <person name="Harris B."/>
            <person name="Quail M.A."/>
            <person name="Achtman M."/>
            <person name="Atkin R."/>
            <person name="Baker S."/>
            <person name="Basham D."/>
            <person name="Bason N."/>
            <person name="Cherevach I."/>
            <person name="Chillingworth T."/>
            <person name="Collins M."/>
            <person name="Cronin A."/>
            <person name="Davis P."/>
            <person name="Doggett J."/>
            <person name="Feltwell T."/>
            <person name="Goble A."/>
            <person name="Hamlin N."/>
            <person name="Hauser H."/>
            <person name="Holroyd S."/>
            <person name="Jagels K."/>
            <person name="Leather S."/>
            <person name="Moule S."/>
            <person name="Norberczak H."/>
            <person name="O'Neil S."/>
            <person name="Ormond D."/>
            <person name="Price C."/>
            <person name="Rabbinowitsch E."/>
            <person name="Rutter S."/>
            <person name="Sanders M."/>
            <person name="Saunders D."/>
            <person name="Seeger K."/>
            <person name="Sharp S."/>
            <person name="Simmonds M."/>
            <person name="Skelton J."/>
            <person name="Squares R."/>
            <person name="Squares S."/>
            <person name="Stevens K."/>
            <person name="Unwin L."/>
            <person name="Whitehead S."/>
            <person name="Barrell B.G."/>
            <person name="Maskell D.J."/>
        </authorList>
    </citation>
    <scope>NUCLEOTIDE SEQUENCE [LARGE SCALE GENOMIC DNA]</scope>
    <source>
        <strain>12822 / ATCC BAA-587 / NCTC 13253</strain>
    </source>
</reference>
<sequence>MMRSLHSLRRMSGTVLALMLAAGLPLSAAQAQPAKPAPKGDQKPATPAPSEQFVDGIAAIVNKDVITLREVREASKLASADLQKRGIQVPDERTLQKQVLQRLIMERLERQEVDRMGIRVDEAQVDQAINMIASRNKITPAAMRAEIEKSGVTWEQYRKSLRDDIRMDRLRQRAVDANIIISDAEVDAFLKDQERNPAAAQATRAPAPQQPQPQPRQPAQSGPAMLVLAQILVRVPEGSSPDQVAALRKKAEGLLARAKKGDDFASLAAANSDGPEALQGGMMGARPLDGWPDLFVKAAGSLSAGQVSGLVQSGNGFHILKVVDRAGGGQPAQAARPAPAPAPQQPSSFQEGPSVAAPQGPVRVTQTHARHILIKTSTVMTDDQARQRLEQIRERLQGGAVKFEDMARQYSQDSTAPQGGDLGWVNPGDTVPPFEAAMNALQPNEISPPVLSPFGWHLIQVLERREHDVSDEVQRMRARQLLFERRAVPAFEDWLEQLRSQAFIDNRLEKQERLEQNNR</sequence>
<proteinExistence type="inferred from homology"/>
<comment type="function">
    <text evidence="1">Chaperone involved in the correct folding and assembly of outer membrane proteins. Recognizes specific patterns of aromatic residues and the orientation of their side chains, which are found more frequently in integral outer membrane proteins. May act in both early periplasmic and late outer membrane-associated steps of protein maturation.</text>
</comment>
<comment type="catalytic activity">
    <reaction evidence="1">
        <text>[protein]-peptidylproline (omega=180) = [protein]-peptidylproline (omega=0)</text>
        <dbReference type="Rhea" id="RHEA:16237"/>
        <dbReference type="Rhea" id="RHEA-COMP:10747"/>
        <dbReference type="Rhea" id="RHEA-COMP:10748"/>
        <dbReference type="ChEBI" id="CHEBI:83833"/>
        <dbReference type="ChEBI" id="CHEBI:83834"/>
        <dbReference type="EC" id="5.2.1.8"/>
    </reaction>
</comment>
<comment type="subcellular location">
    <subcellularLocation>
        <location evidence="1">Periplasm</location>
    </subcellularLocation>
    <text evidence="1">Is capable of associating with the outer membrane.</text>
</comment>
<comment type="domain">
    <text evidence="1">The PPIase activity resides only in the second parvulin domain. The N-terminal region and the C-terminal tail are necessary and sufficient for the chaperone activity of SurA. The PPIase activity is dispensable for SurA to function as a chaperone. The N-terminal region and the C-terminal tail are also required for porin recognition.</text>
</comment>
<accession>Q7W4J5</accession>
<organism>
    <name type="scientific">Bordetella parapertussis (strain 12822 / ATCC BAA-587 / NCTC 13253)</name>
    <dbReference type="NCBI Taxonomy" id="257311"/>
    <lineage>
        <taxon>Bacteria</taxon>
        <taxon>Pseudomonadati</taxon>
        <taxon>Pseudomonadota</taxon>
        <taxon>Betaproteobacteria</taxon>
        <taxon>Burkholderiales</taxon>
        <taxon>Alcaligenaceae</taxon>
        <taxon>Bordetella</taxon>
    </lineage>
</organism>
<dbReference type="EC" id="5.2.1.8" evidence="1"/>
<dbReference type="EMBL" id="BX640434">
    <property type="protein sequence ID" value="CAE38950.1"/>
    <property type="molecule type" value="Genomic_DNA"/>
</dbReference>
<dbReference type="RefSeq" id="WP_010929186.1">
    <property type="nucleotide sequence ID" value="NC_002928.3"/>
</dbReference>
<dbReference type="SMR" id="Q7W4J5"/>
<dbReference type="GeneID" id="93205454"/>
<dbReference type="KEGG" id="bpa:BPP3666"/>
<dbReference type="HOGENOM" id="CLU_034646_11_0_4"/>
<dbReference type="Proteomes" id="UP000001421">
    <property type="component" value="Chromosome"/>
</dbReference>
<dbReference type="GO" id="GO:0030288">
    <property type="term" value="C:outer membrane-bounded periplasmic space"/>
    <property type="evidence" value="ECO:0007669"/>
    <property type="project" value="InterPro"/>
</dbReference>
<dbReference type="GO" id="GO:0042277">
    <property type="term" value="F:peptide binding"/>
    <property type="evidence" value="ECO:0007669"/>
    <property type="project" value="InterPro"/>
</dbReference>
<dbReference type="GO" id="GO:0003755">
    <property type="term" value="F:peptidyl-prolyl cis-trans isomerase activity"/>
    <property type="evidence" value="ECO:0007669"/>
    <property type="project" value="UniProtKB-UniRule"/>
</dbReference>
<dbReference type="GO" id="GO:0051082">
    <property type="term" value="F:unfolded protein binding"/>
    <property type="evidence" value="ECO:0007669"/>
    <property type="project" value="UniProtKB-UniRule"/>
</dbReference>
<dbReference type="GO" id="GO:0043165">
    <property type="term" value="P:Gram-negative-bacterium-type cell outer membrane assembly"/>
    <property type="evidence" value="ECO:0007669"/>
    <property type="project" value="InterPro"/>
</dbReference>
<dbReference type="GO" id="GO:0006457">
    <property type="term" value="P:protein folding"/>
    <property type="evidence" value="ECO:0007669"/>
    <property type="project" value="UniProtKB-UniRule"/>
</dbReference>
<dbReference type="GO" id="GO:0050821">
    <property type="term" value="P:protein stabilization"/>
    <property type="evidence" value="ECO:0007669"/>
    <property type="project" value="InterPro"/>
</dbReference>
<dbReference type="Gene3D" id="3.10.50.40">
    <property type="match status" value="2"/>
</dbReference>
<dbReference type="Gene3D" id="1.10.4030.10">
    <property type="entry name" value="Porin chaperone SurA, peptide-binding domain"/>
    <property type="match status" value="1"/>
</dbReference>
<dbReference type="HAMAP" id="MF_01183">
    <property type="entry name" value="Chaperone_SurA"/>
    <property type="match status" value="1"/>
</dbReference>
<dbReference type="InterPro" id="IPR050280">
    <property type="entry name" value="OMP_Chaperone_SurA"/>
</dbReference>
<dbReference type="InterPro" id="IPR046357">
    <property type="entry name" value="PPIase_dom_sf"/>
</dbReference>
<dbReference type="InterPro" id="IPR000297">
    <property type="entry name" value="PPIase_PpiC"/>
</dbReference>
<dbReference type="InterPro" id="IPR023034">
    <property type="entry name" value="PPIase_SurA"/>
</dbReference>
<dbReference type="InterPro" id="IPR015391">
    <property type="entry name" value="SurA_N"/>
</dbReference>
<dbReference type="InterPro" id="IPR027304">
    <property type="entry name" value="Trigger_fact/SurA_dom_sf"/>
</dbReference>
<dbReference type="PANTHER" id="PTHR47637">
    <property type="entry name" value="CHAPERONE SURA"/>
    <property type="match status" value="1"/>
</dbReference>
<dbReference type="PANTHER" id="PTHR47637:SF1">
    <property type="entry name" value="CHAPERONE SURA"/>
    <property type="match status" value="1"/>
</dbReference>
<dbReference type="Pfam" id="PF00639">
    <property type="entry name" value="Rotamase"/>
    <property type="match status" value="1"/>
</dbReference>
<dbReference type="Pfam" id="PF13616">
    <property type="entry name" value="Rotamase_3"/>
    <property type="match status" value="1"/>
</dbReference>
<dbReference type="Pfam" id="PF09312">
    <property type="entry name" value="SurA_N"/>
    <property type="match status" value="1"/>
</dbReference>
<dbReference type="SUPFAM" id="SSF54534">
    <property type="entry name" value="FKBP-like"/>
    <property type="match status" value="2"/>
</dbReference>
<dbReference type="SUPFAM" id="SSF109998">
    <property type="entry name" value="Triger factor/SurA peptide-binding domain-like"/>
    <property type="match status" value="1"/>
</dbReference>
<dbReference type="PROSITE" id="PS50198">
    <property type="entry name" value="PPIC_PPIASE_2"/>
    <property type="match status" value="2"/>
</dbReference>
<gene>
    <name evidence="1" type="primary">surA</name>
    <name type="ordered locus">BPP3666</name>
</gene>
<evidence type="ECO:0000255" key="1">
    <source>
        <dbReference type="HAMAP-Rule" id="MF_01183"/>
    </source>
</evidence>
<evidence type="ECO:0000256" key="2">
    <source>
        <dbReference type="SAM" id="MobiDB-lite"/>
    </source>
</evidence>
<keyword id="KW-0143">Chaperone</keyword>
<keyword id="KW-0413">Isomerase</keyword>
<keyword id="KW-0574">Periplasm</keyword>
<keyword id="KW-0677">Repeat</keyword>
<keyword id="KW-0697">Rotamase</keyword>
<keyword id="KW-0732">Signal</keyword>
<protein>
    <recommendedName>
        <fullName evidence="1">Chaperone SurA</fullName>
    </recommendedName>
    <alternativeName>
        <fullName evidence="1">Peptidyl-prolyl cis-trans isomerase SurA</fullName>
        <shortName evidence="1">PPIase SurA</shortName>
        <ecNumber evidence="1">5.2.1.8</ecNumber>
    </alternativeName>
    <alternativeName>
        <fullName evidence="1">Rotamase SurA</fullName>
    </alternativeName>
</protein>
<name>SURA_BORPA</name>